<protein>
    <recommendedName>
        <fullName evidence="1">Small ribosomal subunit protein bS20</fullName>
    </recommendedName>
    <alternativeName>
        <fullName evidence="2">30S ribosomal protein S20</fullName>
    </alternativeName>
</protein>
<name>RS20_PSECP</name>
<proteinExistence type="inferred from homology"/>
<organism>
    <name type="scientific">Pseudarthrobacter chlorophenolicus (strain ATCC 700700 / DSM 12829 / CIP 107037 / JCM 12360 / KCTC 9906 / NCIMB 13794 / A6)</name>
    <name type="common">Arthrobacter chlorophenolicus</name>
    <dbReference type="NCBI Taxonomy" id="452863"/>
    <lineage>
        <taxon>Bacteria</taxon>
        <taxon>Bacillati</taxon>
        <taxon>Actinomycetota</taxon>
        <taxon>Actinomycetes</taxon>
        <taxon>Micrococcales</taxon>
        <taxon>Micrococcaceae</taxon>
        <taxon>Pseudarthrobacter</taxon>
    </lineage>
</organism>
<evidence type="ECO:0000255" key="1">
    <source>
        <dbReference type="HAMAP-Rule" id="MF_00500"/>
    </source>
</evidence>
<evidence type="ECO:0000305" key="2"/>
<comment type="function">
    <text evidence="1">Binds directly to 16S ribosomal RNA.</text>
</comment>
<comment type="similarity">
    <text evidence="1">Belongs to the bacterial ribosomal protein bS20 family.</text>
</comment>
<accession>B8H8S5</accession>
<sequence length="86" mass="9239">MANIKSQKKRILTNEKARLRNNAVKSELRTAIRAVNTAVESADKDAAATALVSASRKLDKAVSKGVLHKNNAANRKSAISKKVNAL</sequence>
<feature type="chain" id="PRO_1000135769" description="Small ribosomal subunit protein bS20">
    <location>
        <begin position="1"/>
        <end position="86"/>
    </location>
</feature>
<reference key="1">
    <citation type="submission" date="2009-01" db="EMBL/GenBank/DDBJ databases">
        <title>Complete sequence of chromosome of Arthrobacter chlorophenolicus A6.</title>
        <authorList>
            <consortium name="US DOE Joint Genome Institute"/>
            <person name="Lucas S."/>
            <person name="Copeland A."/>
            <person name="Lapidus A."/>
            <person name="Glavina del Rio T."/>
            <person name="Tice H."/>
            <person name="Bruce D."/>
            <person name="Goodwin L."/>
            <person name="Pitluck S."/>
            <person name="Goltsman E."/>
            <person name="Clum A."/>
            <person name="Larimer F."/>
            <person name="Land M."/>
            <person name="Hauser L."/>
            <person name="Kyrpides N."/>
            <person name="Mikhailova N."/>
            <person name="Jansson J."/>
            <person name="Richardson P."/>
        </authorList>
    </citation>
    <scope>NUCLEOTIDE SEQUENCE [LARGE SCALE GENOMIC DNA]</scope>
    <source>
        <strain>ATCC 700700 / DSM 12829 / CIP 107037 / JCM 12360 / KCTC 9906 / NCIMB 13794 / A6</strain>
    </source>
</reference>
<dbReference type="EMBL" id="CP001341">
    <property type="protein sequence ID" value="ACL39953.1"/>
    <property type="molecule type" value="Genomic_DNA"/>
</dbReference>
<dbReference type="RefSeq" id="WP_015937172.1">
    <property type="nucleotide sequence ID" value="NC_011886.1"/>
</dbReference>
<dbReference type="SMR" id="B8H8S5"/>
<dbReference type="STRING" id="452863.Achl_1979"/>
<dbReference type="KEGG" id="ach:Achl_1979"/>
<dbReference type="eggNOG" id="COG0268">
    <property type="taxonomic scope" value="Bacteria"/>
</dbReference>
<dbReference type="HOGENOM" id="CLU_160655_0_1_11"/>
<dbReference type="OrthoDB" id="9807974at2"/>
<dbReference type="Proteomes" id="UP000002505">
    <property type="component" value="Chromosome"/>
</dbReference>
<dbReference type="GO" id="GO:0005829">
    <property type="term" value="C:cytosol"/>
    <property type="evidence" value="ECO:0007669"/>
    <property type="project" value="TreeGrafter"/>
</dbReference>
<dbReference type="GO" id="GO:0015935">
    <property type="term" value="C:small ribosomal subunit"/>
    <property type="evidence" value="ECO:0007669"/>
    <property type="project" value="TreeGrafter"/>
</dbReference>
<dbReference type="GO" id="GO:0070181">
    <property type="term" value="F:small ribosomal subunit rRNA binding"/>
    <property type="evidence" value="ECO:0007669"/>
    <property type="project" value="TreeGrafter"/>
</dbReference>
<dbReference type="GO" id="GO:0003735">
    <property type="term" value="F:structural constituent of ribosome"/>
    <property type="evidence" value="ECO:0007669"/>
    <property type="project" value="InterPro"/>
</dbReference>
<dbReference type="GO" id="GO:0006412">
    <property type="term" value="P:translation"/>
    <property type="evidence" value="ECO:0007669"/>
    <property type="project" value="UniProtKB-UniRule"/>
</dbReference>
<dbReference type="FunFam" id="1.20.58.110:FF:000001">
    <property type="entry name" value="30S ribosomal protein S20"/>
    <property type="match status" value="1"/>
</dbReference>
<dbReference type="Gene3D" id="1.20.58.110">
    <property type="entry name" value="Ribosomal protein S20"/>
    <property type="match status" value="1"/>
</dbReference>
<dbReference type="HAMAP" id="MF_00500">
    <property type="entry name" value="Ribosomal_bS20"/>
    <property type="match status" value="1"/>
</dbReference>
<dbReference type="InterPro" id="IPR002583">
    <property type="entry name" value="Ribosomal_bS20"/>
</dbReference>
<dbReference type="InterPro" id="IPR036510">
    <property type="entry name" value="Ribosomal_bS20_sf"/>
</dbReference>
<dbReference type="NCBIfam" id="TIGR00029">
    <property type="entry name" value="S20"/>
    <property type="match status" value="1"/>
</dbReference>
<dbReference type="PANTHER" id="PTHR33398">
    <property type="entry name" value="30S RIBOSOMAL PROTEIN S20"/>
    <property type="match status" value="1"/>
</dbReference>
<dbReference type="PANTHER" id="PTHR33398:SF1">
    <property type="entry name" value="SMALL RIBOSOMAL SUBUNIT PROTEIN BS20C"/>
    <property type="match status" value="1"/>
</dbReference>
<dbReference type="Pfam" id="PF01649">
    <property type="entry name" value="Ribosomal_S20p"/>
    <property type="match status" value="1"/>
</dbReference>
<dbReference type="SUPFAM" id="SSF46992">
    <property type="entry name" value="Ribosomal protein S20"/>
    <property type="match status" value="1"/>
</dbReference>
<keyword id="KW-0687">Ribonucleoprotein</keyword>
<keyword id="KW-0689">Ribosomal protein</keyword>
<keyword id="KW-0694">RNA-binding</keyword>
<keyword id="KW-0699">rRNA-binding</keyword>
<gene>
    <name evidence="1" type="primary">rpsT</name>
    <name type="ordered locus">Achl_1979</name>
</gene>